<evidence type="ECO:0000255" key="1">
    <source>
        <dbReference type="HAMAP-Rule" id="MF_01302"/>
    </source>
</evidence>
<evidence type="ECO:0000305" key="2"/>
<sequence>MAFITDPIADMLTRIRNATIRKHKNVSFQHSKTKVKILEIIQKAGYIKDFQVEGDLKKNITVELKYKGNLSSISGLKRISKPSLRVYTSASKIPFVQSGFGIAILSTSKGLLTDSQARKENVGGEIIAYIW</sequence>
<name>RS8_MESHJ</name>
<comment type="function">
    <text evidence="1">One of the primary rRNA binding proteins, it binds directly to 16S rRNA central domain where it helps coordinate assembly of the platform of the 30S subunit.</text>
</comment>
<comment type="subunit">
    <text evidence="1">Part of the 30S ribosomal subunit. Contacts proteins S5 and S12.</text>
</comment>
<comment type="similarity">
    <text evidence="1">Belongs to the universal ribosomal protein uS8 family.</text>
</comment>
<protein>
    <recommendedName>
        <fullName evidence="1">Small ribosomal subunit protein uS8</fullName>
    </recommendedName>
    <alternativeName>
        <fullName evidence="2">30S ribosomal protein S8</fullName>
    </alternativeName>
</protein>
<accession>Q4AAF4</accession>
<organism>
    <name type="scientific">Mesomycoplasma hyopneumoniae (strain J / ATCC 25934 / NCTC 10110)</name>
    <name type="common">Mycoplasma hyopneumoniae</name>
    <dbReference type="NCBI Taxonomy" id="262719"/>
    <lineage>
        <taxon>Bacteria</taxon>
        <taxon>Bacillati</taxon>
        <taxon>Mycoplasmatota</taxon>
        <taxon>Mycoplasmoidales</taxon>
        <taxon>Metamycoplasmataceae</taxon>
        <taxon>Mesomycoplasma</taxon>
    </lineage>
</organism>
<gene>
    <name evidence="1" type="primary">rpsH</name>
    <name type="ordered locus">MHJ_0176</name>
</gene>
<dbReference type="EMBL" id="AE017243">
    <property type="protein sequence ID" value="AAZ44267.1"/>
    <property type="molecule type" value="Genomic_DNA"/>
</dbReference>
<dbReference type="RefSeq" id="WP_011206039.1">
    <property type="nucleotide sequence ID" value="NC_007295.1"/>
</dbReference>
<dbReference type="SMR" id="Q4AAF4"/>
<dbReference type="GeneID" id="41334479"/>
<dbReference type="KEGG" id="mhj:MHJ_0176"/>
<dbReference type="eggNOG" id="COG0096">
    <property type="taxonomic scope" value="Bacteria"/>
</dbReference>
<dbReference type="HOGENOM" id="CLU_098428_0_2_14"/>
<dbReference type="OrthoDB" id="9802617at2"/>
<dbReference type="Proteomes" id="UP000000548">
    <property type="component" value="Chromosome"/>
</dbReference>
<dbReference type="GO" id="GO:1990904">
    <property type="term" value="C:ribonucleoprotein complex"/>
    <property type="evidence" value="ECO:0007669"/>
    <property type="project" value="UniProtKB-KW"/>
</dbReference>
<dbReference type="GO" id="GO:0005840">
    <property type="term" value="C:ribosome"/>
    <property type="evidence" value="ECO:0007669"/>
    <property type="project" value="UniProtKB-KW"/>
</dbReference>
<dbReference type="GO" id="GO:0019843">
    <property type="term" value="F:rRNA binding"/>
    <property type="evidence" value="ECO:0007669"/>
    <property type="project" value="UniProtKB-UniRule"/>
</dbReference>
<dbReference type="GO" id="GO:0003735">
    <property type="term" value="F:structural constituent of ribosome"/>
    <property type="evidence" value="ECO:0007669"/>
    <property type="project" value="InterPro"/>
</dbReference>
<dbReference type="GO" id="GO:0006412">
    <property type="term" value="P:translation"/>
    <property type="evidence" value="ECO:0007669"/>
    <property type="project" value="UniProtKB-UniRule"/>
</dbReference>
<dbReference type="FunFam" id="3.30.1370.30:FF:000002">
    <property type="entry name" value="30S ribosomal protein S8"/>
    <property type="match status" value="1"/>
</dbReference>
<dbReference type="FunFam" id="3.30.1490.10:FF:000001">
    <property type="entry name" value="30S ribosomal protein S8"/>
    <property type="match status" value="1"/>
</dbReference>
<dbReference type="Gene3D" id="3.30.1370.30">
    <property type="match status" value="1"/>
</dbReference>
<dbReference type="Gene3D" id="3.30.1490.10">
    <property type="match status" value="1"/>
</dbReference>
<dbReference type="HAMAP" id="MF_01302_B">
    <property type="entry name" value="Ribosomal_uS8_B"/>
    <property type="match status" value="1"/>
</dbReference>
<dbReference type="InterPro" id="IPR000630">
    <property type="entry name" value="Ribosomal_uS8"/>
</dbReference>
<dbReference type="InterPro" id="IPR047863">
    <property type="entry name" value="Ribosomal_uS8_CS"/>
</dbReference>
<dbReference type="InterPro" id="IPR035987">
    <property type="entry name" value="Ribosomal_uS8_sf"/>
</dbReference>
<dbReference type="NCBIfam" id="NF001109">
    <property type="entry name" value="PRK00136.1"/>
    <property type="match status" value="1"/>
</dbReference>
<dbReference type="PANTHER" id="PTHR11758">
    <property type="entry name" value="40S RIBOSOMAL PROTEIN S15A"/>
    <property type="match status" value="1"/>
</dbReference>
<dbReference type="Pfam" id="PF00410">
    <property type="entry name" value="Ribosomal_S8"/>
    <property type="match status" value="1"/>
</dbReference>
<dbReference type="SUPFAM" id="SSF56047">
    <property type="entry name" value="Ribosomal protein S8"/>
    <property type="match status" value="1"/>
</dbReference>
<dbReference type="PROSITE" id="PS00053">
    <property type="entry name" value="RIBOSOMAL_S8"/>
    <property type="match status" value="1"/>
</dbReference>
<reference key="1">
    <citation type="journal article" date="2005" name="J. Bacteriol.">
        <title>Swine and poultry pathogens: the complete genome sequences of two strains of Mycoplasma hyopneumoniae and a strain of Mycoplasma synoviae.</title>
        <authorList>
            <person name="Vasconcelos A.T.R."/>
            <person name="Ferreira H.B."/>
            <person name="Bizarro C.V."/>
            <person name="Bonatto S.L."/>
            <person name="Carvalho M.O."/>
            <person name="Pinto P.M."/>
            <person name="Almeida D.F."/>
            <person name="Almeida L.G.P."/>
            <person name="Almeida R."/>
            <person name="Alves-Junior L."/>
            <person name="Assuncao E.N."/>
            <person name="Azevedo V.A.C."/>
            <person name="Bogo M.R."/>
            <person name="Brigido M.M."/>
            <person name="Brocchi M."/>
            <person name="Burity H.A."/>
            <person name="Camargo A.A."/>
            <person name="Camargo S.S."/>
            <person name="Carepo M.S."/>
            <person name="Carraro D.M."/>
            <person name="de Mattos Cascardo J.C."/>
            <person name="Castro L.A."/>
            <person name="Cavalcanti G."/>
            <person name="Chemale G."/>
            <person name="Collevatti R.G."/>
            <person name="Cunha C.W."/>
            <person name="Dallagiovanna B."/>
            <person name="Dambros B.P."/>
            <person name="Dellagostin O.A."/>
            <person name="Falcao C."/>
            <person name="Fantinatti-Garboggini F."/>
            <person name="Felipe M.S.S."/>
            <person name="Fiorentin L."/>
            <person name="Franco G.R."/>
            <person name="Freitas N.S.A."/>
            <person name="Frias D."/>
            <person name="Grangeiro T.B."/>
            <person name="Grisard E.C."/>
            <person name="Guimaraes C.T."/>
            <person name="Hungria M."/>
            <person name="Jardim S.N."/>
            <person name="Krieger M.A."/>
            <person name="Laurino J.P."/>
            <person name="Lima L.F.A."/>
            <person name="Lopes M.I."/>
            <person name="Loreto E.L.S."/>
            <person name="Madeira H.M.F."/>
            <person name="Manfio G.P."/>
            <person name="Maranhao A.Q."/>
            <person name="Martinkovics C.T."/>
            <person name="Medeiros S.R.B."/>
            <person name="Moreira M.A.M."/>
            <person name="Neiva M."/>
            <person name="Ramalho-Neto C.E."/>
            <person name="Nicolas M.F."/>
            <person name="Oliveira S.C."/>
            <person name="Paixao R.F.C."/>
            <person name="Pedrosa F.O."/>
            <person name="Pena S.D.J."/>
            <person name="Pereira M."/>
            <person name="Pereira-Ferrari L."/>
            <person name="Piffer I."/>
            <person name="Pinto L.S."/>
            <person name="Potrich D.P."/>
            <person name="Salim A.C.M."/>
            <person name="Santos F.R."/>
            <person name="Schmitt R."/>
            <person name="Schneider M.P.C."/>
            <person name="Schrank A."/>
            <person name="Schrank I.S."/>
            <person name="Schuck A.F."/>
            <person name="Seuanez H.N."/>
            <person name="Silva D.W."/>
            <person name="Silva R."/>
            <person name="Silva S.C."/>
            <person name="Soares C.M.A."/>
            <person name="Souza K.R.L."/>
            <person name="Souza R.C."/>
            <person name="Staats C.C."/>
            <person name="Steffens M.B.R."/>
            <person name="Teixeira S.M.R."/>
            <person name="Urmenyi T.P."/>
            <person name="Vainstein M.H."/>
            <person name="Zuccherato L.W."/>
            <person name="Simpson A.J.G."/>
            <person name="Zaha A."/>
        </authorList>
    </citation>
    <scope>NUCLEOTIDE SEQUENCE [LARGE SCALE GENOMIC DNA]</scope>
    <source>
        <strain>J / ATCC 25934 / NCTC 10110</strain>
    </source>
</reference>
<keyword id="KW-0687">Ribonucleoprotein</keyword>
<keyword id="KW-0689">Ribosomal protein</keyword>
<keyword id="KW-0694">RNA-binding</keyword>
<keyword id="KW-0699">rRNA-binding</keyword>
<feature type="chain" id="PRO_0000225874" description="Small ribosomal subunit protein uS8">
    <location>
        <begin position="1"/>
        <end position="131"/>
    </location>
</feature>
<proteinExistence type="inferred from homology"/>